<reference key="1">
    <citation type="journal article" date="2001" name="Nature">
        <title>Complete genome sequence of a multiple drug resistant Salmonella enterica serovar Typhi CT18.</title>
        <authorList>
            <person name="Parkhill J."/>
            <person name="Dougan G."/>
            <person name="James K.D."/>
            <person name="Thomson N.R."/>
            <person name="Pickard D."/>
            <person name="Wain J."/>
            <person name="Churcher C.M."/>
            <person name="Mungall K.L."/>
            <person name="Bentley S.D."/>
            <person name="Holden M.T.G."/>
            <person name="Sebaihia M."/>
            <person name="Baker S."/>
            <person name="Basham D."/>
            <person name="Brooks K."/>
            <person name="Chillingworth T."/>
            <person name="Connerton P."/>
            <person name="Cronin A."/>
            <person name="Davis P."/>
            <person name="Davies R.M."/>
            <person name="Dowd L."/>
            <person name="White N."/>
            <person name="Farrar J."/>
            <person name="Feltwell T."/>
            <person name="Hamlin N."/>
            <person name="Haque A."/>
            <person name="Hien T.T."/>
            <person name="Holroyd S."/>
            <person name="Jagels K."/>
            <person name="Krogh A."/>
            <person name="Larsen T.S."/>
            <person name="Leather S."/>
            <person name="Moule S."/>
            <person name="O'Gaora P."/>
            <person name="Parry C."/>
            <person name="Quail M.A."/>
            <person name="Rutherford K.M."/>
            <person name="Simmonds M."/>
            <person name="Skelton J."/>
            <person name="Stevens K."/>
            <person name="Whitehead S."/>
            <person name="Barrell B.G."/>
        </authorList>
    </citation>
    <scope>NUCLEOTIDE SEQUENCE [LARGE SCALE GENOMIC DNA]</scope>
    <source>
        <strain>CT18</strain>
    </source>
</reference>
<reference key="2">
    <citation type="journal article" date="2003" name="J. Bacteriol.">
        <title>Comparative genomics of Salmonella enterica serovar Typhi strains Ty2 and CT18.</title>
        <authorList>
            <person name="Deng W."/>
            <person name="Liou S.-R."/>
            <person name="Plunkett G. III"/>
            <person name="Mayhew G.F."/>
            <person name="Rose D.J."/>
            <person name="Burland V."/>
            <person name="Kodoyianni V."/>
            <person name="Schwartz D.C."/>
            <person name="Blattner F.R."/>
        </authorList>
    </citation>
    <scope>NUCLEOTIDE SEQUENCE [LARGE SCALE GENOMIC DNA]</scope>
    <source>
        <strain>ATCC 700931 / Ty2</strain>
    </source>
</reference>
<gene>
    <name type="primary">cyaA</name>
    <name type="synonym">cya</name>
    <name type="ordered locus">STY3620</name>
    <name type="ordered locus">t3358</name>
</gene>
<keyword id="KW-0067">ATP-binding</keyword>
<keyword id="KW-0115">cAMP biosynthesis</keyword>
<keyword id="KW-0963">Cytoplasm</keyword>
<keyword id="KW-0456">Lyase</keyword>
<keyword id="KW-0547">Nucleotide-binding</keyword>
<keyword id="KW-0597">Phosphoprotein</keyword>
<feature type="chain" id="PRO_0000195672" description="Adenylate cyclase">
    <location>
        <begin position="1"/>
        <end position="848"/>
    </location>
</feature>
<feature type="region of interest" description="Catalytic">
    <location>
        <begin position="1"/>
        <end position="535"/>
    </location>
</feature>
<feature type="region of interest" description="Regulatory">
    <location>
        <begin position="541"/>
        <end position="848"/>
    </location>
</feature>
<feature type="modified residue" description="Phosphohistidine; by CRR" evidence="2">
    <location>
        <position position="609"/>
    </location>
</feature>
<accession>P0A1A8</accession>
<accession>Q05878</accession>
<protein>
    <recommendedName>
        <fullName>Adenylate cyclase</fullName>
        <ecNumber>4.6.1.1</ecNumber>
    </recommendedName>
    <alternativeName>
        <fullName>ATP pyrophosphate-lyase</fullName>
    </alternativeName>
    <alternativeName>
        <fullName>Adenylyl cyclase</fullName>
    </alternativeName>
</protein>
<name>CYAA_SALTI</name>
<dbReference type="EC" id="4.6.1.1"/>
<dbReference type="EMBL" id="AL513382">
    <property type="protein sequence ID" value="CAD09381.1"/>
    <property type="molecule type" value="Genomic_DNA"/>
</dbReference>
<dbReference type="EMBL" id="AE014613">
    <property type="protein sequence ID" value="AAO70886.1"/>
    <property type="molecule type" value="Genomic_DNA"/>
</dbReference>
<dbReference type="RefSeq" id="NP_457812.1">
    <property type="nucleotide sequence ID" value="NC_003198.1"/>
</dbReference>
<dbReference type="RefSeq" id="WP_000281718.1">
    <property type="nucleotide sequence ID" value="NZ_WSUR01000032.1"/>
</dbReference>
<dbReference type="STRING" id="220341.gene:17587472"/>
<dbReference type="KEGG" id="stt:t3358"/>
<dbReference type="KEGG" id="sty:STY3620"/>
<dbReference type="PATRIC" id="fig|220341.7.peg.3689"/>
<dbReference type="eggNOG" id="COG3072">
    <property type="taxonomic scope" value="Bacteria"/>
</dbReference>
<dbReference type="HOGENOM" id="CLU_013280_0_0_6"/>
<dbReference type="OMA" id="YDDYVMS"/>
<dbReference type="OrthoDB" id="5571448at2"/>
<dbReference type="Proteomes" id="UP000000541">
    <property type="component" value="Chromosome"/>
</dbReference>
<dbReference type="Proteomes" id="UP000002670">
    <property type="component" value="Chromosome"/>
</dbReference>
<dbReference type="GO" id="GO:0005737">
    <property type="term" value="C:cytoplasm"/>
    <property type="evidence" value="ECO:0007669"/>
    <property type="project" value="UniProtKB-SubCell"/>
</dbReference>
<dbReference type="GO" id="GO:0004016">
    <property type="term" value="F:adenylate cyclase activity"/>
    <property type="evidence" value="ECO:0007669"/>
    <property type="project" value="UniProtKB-EC"/>
</dbReference>
<dbReference type="GO" id="GO:0005524">
    <property type="term" value="F:ATP binding"/>
    <property type="evidence" value="ECO:0007669"/>
    <property type="project" value="UniProtKB-KW"/>
</dbReference>
<dbReference type="GO" id="GO:0006171">
    <property type="term" value="P:cAMP biosynthetic process"/>
    <property type="evidence" value="ECO:0007669"/>
    <property type="project" value="UniProtKB-KW"/>
</dbReference>
<dbReference type="InterPro" id="IPR000274">
    <property type="entry name" value="Adenylate_cyclase_1"/>
</dbReference>
<dbReference type="InterPro" id="IPR024686">
    <property type="entry name" value="Adenylate_cyclase_1_CS"/>
</dbReference>
<dbReference type="InterPro" id="IPR024685">
    <property type="entry name" value="Adenylate_cyclase_1_N"/>
</dbReference>
<dbReference type="NCBIfam" id="NF006977">
    <property type="entry name" value="PRK09450.1-1"/>
    <property type="match status" value="1"/>
</dbReference>
<dbReference type="NCBIfam" id="NF006978">
    <property type="entry name" value="PRK09450.1-2"/>
    <property type="match status" value="1"/>
</dbReference>
<dbReference type="NCBIfam" id="NF006979">
    <property type="entry name" value="PRK09450.1-4"/>
    <property type="match status" value="1"/>
</dbReference>
<dbReference type="PANTHER" id="PTHR38760">
    <property type="entry name" value="ADENYLATE CYCLASE"/>
    <property type="match status" value="1"/>
</dbReference>
<dbReference type="PANTHER" id="PTHR38760:SF1">
    <property type="entry name" value="ADENYLATE CYCLASE"/>
    <property type="match status" value="1"/>
</dbReference>
<dbReference type="Pfam" id="PF12633">
    <property type="entry name" value="Adenyl_cycl_N"/>
    <property type="match status" value="1"/>
</dbReference>
<dbReference type="Pfam" id="PF01295">
    <property type="entry name" value="Adenylate_cycl"/>
    <property type="match status" value="1"/>
</dbReference>
<dbReference type="PIRSF" id="PIRSF001444">
    <property type="entry name" value="Adenylate_cycl"/>
    <property type="match status" value="1"/>
</dbReference>
<dbReference type="PROSITE" id="PS01092">
    <property type="entry name" value="ADENYLATE_CYCLASE_1_1"/>
    <property type="match status" value="1"/>
</dbReference>
<dbReference type="PROSITE" id="PS01093">
    <property type="entry name" value="ADENYLATE_CYCLASE_1_2"/>
    <property type="match status" value="1"/>
</dbReference>
<evidence type="ECO:0000250" key="1"/>
<evidence type="ECO:0000255" key="2"/>
<evidence type="ECO:0000305" key="3"/>
<sequence>MYLYIETLKQRLDAINQLRVDRALAAMGPAFQQVYSLLPTLLHYHHPLMPGYLDGNVPSGICFYTPDETQRHYLNELELYRGMTPQDPPKGELPITGVYTMGSTSSVGQSCSSDLDIWVCHQSWLDGEERQLLQRKCSLLESWAASLGVEVSFFLIDENRFRHNESGSLGGEDCGSTQHILLLDEFYRTAVRLAGKRILWSMVPCDEEEHYDDYVMTLYAQGVLTPNEWLDLGGLSSLSAEEYFGASLWQLYKSIDSPYKAVLKTLLLEAYSWEYPNPRLLAKDIKQRLHDGEIVSFGLDPYCMMLERVTEYLTAIEDPTRLDLVRRCFYLKVCEKLSRERACVGWRREVLSQLVSEWGWDDARLTMLDNRANWKIDQVREAHNELLDAMMQSYRNLIRFARRNNLSVSASPQDIGVLTRKLYAAFEALPGKVTLVNPQISPDLSEPNLTFIHVPPGRANRSGWYLYNRAPNMDSIISHQPLEYNRYLNKLVAWAWFNGLLTSRTHLFIKGNGIVDLPKLQEMVADVSHHFPLRLPAPTPKALYSPCEIRHLAIIVNLEYDPTAAFRNKVVHFDFRKLDVFSFGEEQNCLIGSIDLLYRNSWNEVRTLHFNGEQAMIEALKTILGKMHQDAAPPDSVEVFCYSQHLRGLIRTRVQQLVSECIELRLSSTRQETGRFKALRVSGQTWGLFFERLNVSVQKLENAIEFYGAISHNKLHGLSVQVETNQVKLPSVVDGFASEGIIQFFFEETGDEKGFNIYILDESNRAEVYHHCEGSKEELVRDVSRFYSSSHDRFTYGSSFINFNLPQFYQIVKTDGRAQVIPFRTQPINTVPPANQDHDAPLLQQYFS</sequence>
<comment type="catalytic activity">
    <reaction>
        <text>ATP = 3',5'-cyclic AMP + diphosphate</text>
        <dbReference type="Rhea" id="RHEA:15389"/>
        <dbReference type="ChEBI" id="CHEBI:30616"/>
        <dbReference type="ChEBI" id="CHEBI:33019"/>
        <dbReference type="ChEBI" id="CHEBI:58165"/>
        <dbReference type="EC" id="4.6.1.1"/>
    </reaction>
</comment>
<comment type="subcellular location">
    <subcellularLocation>
        <location evidence="1">Cytoplasm</location>
    </subcellularLocation>
</comment>
<comment type="similarity">
    <text evidence="3">Belongs to the adenylyl cyclase class-1 family.</text>
</comment>
<proteinExistence type="inferred from homology"/>
<organism>
    <name type="scientific">Salmonella typhi</name>
    <dbReference type="NCBI Taxonomy" id="90370"/>
    <lineage>
        <taxon>Bacteria</taxon>
        <taxon>Pseudomonadati</taxon>
        <taxon>Pseudomonadota</taxon>
        <taxon>Gammaproteobacteria</taxon>
        <taxon>Enterobacterales</taxon>
        <taxon>Enterobacteriaceae</taxon>
        <taxon>Salmonella</taxon>
    </lineage>
</organism>